<organism>
    <name type="scientific">Thermotoga maritima (strain ATCC 43589 / DSM 3109 / JCM 10099 / NBRC 100826 / MSB8)</name>
    <dbReference type="NCBI Taxonomy" id="243274"/>
    <lineage>
        <taxon>Bacteria</taxon>
        <taxon>Thermotogati</taxon>
        <taxon>Thermotogota</taxon>
        <taxon>Thermotogae</taxon>
        <taxon>Thermotogales</taxon>
        <taxon>Thermotogaceae</taxon>
        <taxon>Thermotoga</taxon>
    </lineage>
</organism>
<sequence>MRFSAVAGRYARALLNVAIEKEKEEEYLRFLDLVCQIYESSRELFDNPILKPEKKISLIKEIMKSFGQEMDEFQERFLTLVFERKRQKLLRNIRDLFEYEKILSEQKVPANLSIAHSPEDEELSLLRKFVRKYALKDPVFDISIDESLIAGALVEFEGFRLDTTVQGRLKRIAREALKRGEMS</sequence>
<protein>
    <recommendedName>
        <fullName evidence="1">ATP synthase subunit delta</fullName>
    </recommendedName>
    <alternativeName>
        <fullName evidence="1">ATP synthase F(1) sector subunit delta</fullName>
    </alternativeName>
    <alternativeName>
        <fullName evidence="1">F-type ATPase subunit delta</fullName>
        <shortName evidence="1">F-ATPase subunit delta</shortName>
    </alternativeName>
</protein>
<name>ATPD_THEMA</name>
<accession>Q9X1U8</accession>
<feature type="chain" id="PRO_0000382161" description="ATP synthase subunit delta">
    <location>
        <begin position="1"/>
        <end position="183"/>
    </location>
</feature>
<keyword id="KW-0066">ATP synthesis</keyword>
<keyword id="KW-0997">Cell inner membrane</keyword>
<keyword id="KW-1003">Cell membrane</keyword>
<keyword id="KW-0139">CF(1)</keyword>
<keyword id="KW-0375">Hydrogen ion transport</keyword>
<keyword id="KW-0406">Ion transport</keyword>
<keyword id="KW-0472">Membrane</keyword>
<keyword id="KW-1185">Reference proteome</keyword>
<keyword id="KW-0813">Transport</keyword>
<dbReference type="EMBL" id="AE000512">
    <property type="protein sequence ID" value="AAD36680.1"/>
    <property type="molecule type" value="Genomic_DNA"/>
</dbReference>
<dbReference type="PIR" id="G72231">
    <property type="entry name" value="G72231"/>
</dbReference>
<dbReference type="RefSeq" id="NP_229413.1">
    <property type="nucleotide sequence ID" value="NC_000853.1"/>
</dbReference>
<dbReference type="RefSeq" id="WP_004082066.1">
    <property type="nucleotide sequence ID" value="NZ_CP011107.1"/>
</dbReference>
<dbReference type="SMR" id="Q9X1U8"/>
<dbReference type="FunCoup" id="Q9X1U8">
    <property type="interactions" value="354"/>
</dbReference>
<dbReference type="STRING" id="243274.TM_1613"/>
<dbReference type="PaxDb" id="243274-THEMA_06185"/>
<dbReference type="EnsemblBacteria" id="AAD36680">
    <property type="protein sequence ID" value="AAD36680"/>
    <property type="gene ID" value="TM_1613"/>
</dbReference>
<dbReference type="KEGG" id="tma:TM1613"/>
<dbReference type="KEGG" id="tmi:THEMA_06185"/>
<dbReference type="KEGG" id="tmm:Tmari_1621"/>
<dbReference type="KEGG" id="tmw:THMA_1653"/>
<dbReference type="eggNOG" id="COG0712">
    <property type="taxonomic scope" value="Bacteria"/>
</dbReference>
<dbReference type="InParanoid" id="Q9X1U8"/>
<dbReference type="OrthoDB" id="9802471at2"/>
<dbReference type="Proteomes" id="UP000008183">
    <property type="component" value="Chromosome"/>
</dbReference>
<dbReference type="GO" id="GO:0005886">
    <property type="term" value="C:plasma membrane"/>
    <property type="evidence" value="ECO:0007669"/>
    <property type="project" value="UniProtKB-SubCell"/>
</dbReference>
<dbReference type="GO" id="GO:0045259">
    <property type="term" value="C:proton-transporting ATP synthase complex"/>
    <property type="evidence" value="ECO:0007669"/>
    <property type="project" value="UniProtKB-KW"/>
</dbReference>
<dbReference type="GO" id="GO:0046933">
    <property type="term" value="F:proton-transporting ATP synthase activity, rotational mechanism"/>
    <property type="evidence" value="ECO:0007669"/>
    <property type="project" value="UniProtKB-UniRule"/>
</dbReference>
<dbReference type="GO" id="GO:0015986">
    <property type="term" value="P:proton motive force-driven ATP synthesis"/>
    <property type="evidence" value="ECO:0000318"/>
    <property type="project" value="GO_Central"/>
</dbReference>
<dbReference type="Gene3D" id="1.10.520.20">
    <property type="entry name" value="N-terminal domain of the delta subunit of the F1F0-ATP synthase"/>
    <property type="match status" value="1"/>
</dbReference>
<dbReference type="HAMAP" id="MF_01416">
    <property type="entry name" value="ATP_synth_delta_bact"/>
    <property type="match status" value="1"/>
</dbReference>
<dbReference type="InterPro" id="IPR026015">
    <property type="entry name" value="ATP_synth_OSCP/delta_N_sf"/>
</dbReference>
<dbReference type="InterPro" id="IPR000711">
    <property type="entry name" value="ATPase_OSCP/dsu"/>
</dbReference>
<dbReference type="NCBIfam" id="TIGR01145">
    <property type="entry name" value="ATP_synt_delta"/>
    <property type="match status" value="1"/>
</dbReference>
<dbReference type="NCBIfam" id="NF009976">
    <property type="entry name" value="PRK13441.1"/>
    <property type="match status" value="1"/>
</dbReference>
<dbReference type="PANTHER" id="PTHR11910">
    <property type="entry name" value="ATP SYNTHASE DELTA CHAIN"/>
    <property type="match status" value="1"/>
</dbReference>
<dbReference type="Pfam" id="PF00213">
    <property type="entry name" value="OSCP"/>
    <property type="match status" value="1"/>
</dbReference>
<dbReference type="PRINTS" id="PR00125">
    <property type="entry name" value="ATPASEDELTA"/>
</dbReference>
<dbReference type="SUPFAM" id="SSF47928">
    <property type="entry name" value="N-terminal domain of the delta subunit of the F1F0-ATP synthase"/>
    <property type="match status" value="1"/>
</dbReference>
<proteinExistence type="inferred from homology"/>
<reference key="1">
    <citation type="journal article" date="1999" name="Nature">
        <title>Evidence for lateral gene transfer between Archaea and Bacteria from genome sequence of Thermotoga maritima.</title>
        <authorList>
            <person name="Nelson K.E."/>
            <person name="Clayton R.A."/>
            <person name="Gill S.R."/>
            <person name="Gwinn M.L."/>
            <person name="Dodson R.J."/>
            <person name="Haft D.H."/>
            <person name="Hickey E.K."/>
            <person name="Peterson J.D."/>
            <person name="Nelson W.C."/>
            <person name="Ketchum K.A."/>
            <person name="McDonald L.A."/>
            <person name="Utterback T.R."/>
            <person name="Malek J.A."/>
            <person name="Linher K.D."/>
            <person name="Garrett M.M."/>
            <person name="Stewart A.M."/>
            <person name="Cotton M.D."/>
            <person name="Pratt M.S."/>
            <person name="Phillips C.A."/>
            <person name="Richardson D.L."/>
            <person name="Heidelberg J.F."/>
            <person name="Sutton G.G."/>
            <person name="Fleischmann R.D."/>
            <person name="Eisen J.A."/>
            <person name="White O."/>
            <person name="Salzberg S.L."/>
            <person name="Smith H.O."/>
            <person name="Venter J.C."/>
            <person name="Fraser C.M."/>
        </authorList>
    </citation>
    <scope>NUCLEOTIDE SEQUENCE [LARGE SCALE GENOMIC DNA]</scope>
    <source>
        <strain>ATCC 43589 / DSM 3109 / JCM 10099 / NBRC 100826 / MSB8</strain>
    </source>
</reference>
<comment type="function">
    <text evidence="1">F(1)F(0) ATP synthase produces ATP from ADP in the presence of a proton or sodium gradient. F-type ATPases consist of two structural domains, F(1) containing the extramembraneous catalytic core and F(0) containing the membrane proton channel, linked together by a central stalk and a peripheral stalk. During catalysis, ATP synthesis in the catalytic domain of F(1) is coupled via a rotary mechanism of the central stalk subunits to proton translocation.</text>
</comment>
<comment type="function">
    <text evidence="1">This protein is part of the stalk that links CF(0) to CF(1). It either transmits conformational changes from CF(0) to CF(1) or is implicated in proton conduction.</text>
</comment>
<comment type="subunit">
    <text evidence="1">F-type ATPases have 2 components, F(1) - the catalytic core - and F(0) - the membrane proton channel. F(1) has five subunits: alpha(3), beta(3), gamma(1), delta(1), epsilon(1). F(0) has three main subunits: a(1), b(2) and c(10-14). The alpha and beta chains form an alternating ring which encloses part of the gamma chain. F(1) is attached to F(0) by a central stalk formed by the gamma and epsilon chains, while a peripheral stalk is formed by the delta and b chains.</text>
</comment>
<comment type="subcellular location">
    <subcellularLocation>
        <location evidence="1">Cell inner membrane</location>
        <topology evidence="1">Peripheral membrane protein</topology>
    </subcellularLocation>
</comment>
<comment type="similarity">
    <text evidence="1">Belongs to the ATPase delta chain family.</text>
</comment>
<evidence type="ECO:0000255" key="1">
    <source>
        <dbReference type="HAMAP-Rule" id="MF_01416"/>
    </source>
</evidence>
<gene>
    <name evidence="1" type="primary">atpH</name>
    <name type="ordered locus">TM_1613</name>
</gene>